<evidence type="ECO:0000250" key="1">
    <source>
        <dbReference type="UniProtKB" id="P09622"/>
    </source>
</evidence>
<evidence type="ECO:0000250" key="2">
    <source>
        <dbReference type="UniProtKB" id="P09624"/>
    </source>
</evidence>
<evidence type="ECO:0000255" key="3"/>
<evidence type="ECO:0000269" key="4">
    <source>
    </source>
</evidence>
<evidence type="ECO:0000269" key="5">
    <source>
    </source>
</evidence>
<evidence type="ECO:0000303" key="6">
    <source>
    </source>
</evidence>
<evidence type="ECO:0000305" key="7"/>
<evidence type="ECO:0000305" key="8">
    <source>
    </source>
</evidence>
<proteinExistence type="evidence at protein level"/>
<organism>
    <name type="scientific">Chaetomium thermophilum (strain DSM 1495 / CBS 144.50 / IMI 039719)</name>
    <name type="common">Thermochaetoides thermophila</name>
    <dbReference type="NCBI Taxonomy" id="759272"/>
    <lineage>
        <taxon>Eukaryota</taxon>
        <taxon>Fungi</taxon>
        <taxon>Dikarya</taxon>
        <taxon>Ascomycota</taxon>
        <taxon>Pezizomycotina</taxon>
        <taxon>Sordariomycetes</taxon>
        <taxon>Sordariomycetidae</taxon>
        <taxon>Sordariales</taxon>
        <taxon>Chaetomiaceae</taxon>
        <taxon>Thermochaetoides</taxon>
    </lineage>
</organism>
<gene>
    <name type="ORF">CTHT_0048590</name>
</gene>
<keyword id="KW-1015">Disulfide bond</keyword>
<keyword id="KW-0274">FAD</keyword>
<keyword id="KW-0285">Flavoprotein</keyword>
<keyword id="KW-0496">Mitochondrion</keyword>
<keyword id="KW-0520">NAD</keyword>
<keyword id="KW-0547">Nucleotide-binding</keyword>
<keyword id="KW-0560">Oxidoreductase</keyword>
<keyword id="KW-0676">Redox-active center</keyword>
<keyword id="KW-1185">Reference proteome</keyword>
<keyword id="KW-0809">Transit peptide</keyword>
<reference key="1">
    <citation type="journal article" date="2011" name="Cell">
        <title>Insight into structure and assembly of the nuclear pore complex by utilizing the genome of a eukaryotic thermophile.</title>
        <authorList>
            <person name="Amlacher S."/>
            <person name="Sarges P."/>
            <person name="Flemming D."/>
            <person name="van Noort V."/>
            <person name="Kunze R."/>
            <person name="Devos D.P."/>
            <person name="Arumugam M."/>
            <person name="Bork P."/>
            <person name="Hurt E."/>
        </authorList>
    </citation>
    <scope>NUCLEOTIDE SEQUENCE [LARGE SCALE GENOMIC DNA]</scope>
    <source>
        <strain>DSM 1495 / CBS 144.50 / IMI 039719</strain>
    </source>
</reference>
<reference key="2">
    <citation type="journal article" date="2021" name="Cell Rep.">
        <title>Integrative structure of a 10-megadalton eukaryotic pyruvate dehydrogenase complex from native cell extracts.</title>
        <authorList>
            <person name="Kyrilis F.L."/>
            <person name="Semchonok D.A."/>
            <person name="Skalidis I."/>
            <person name="Tueting C."/>
            <person name="Hamdi F."/>
            <person name="O'Reilly F.J."/>
            <person name="Rappsilber J."/>
            <person name="Kastritis P.L."/>
        </authorList>
    </citation>
    <scope>FUNCTION</scope>
    <scope>SUBUNIT</scope>
</reference>
<reference key="3">
    <citation type="journal article" date="2021" name="Nat. Commun.">
        <title>Cryo-EM snapshots of a native lysate provide structural insights into a metabolon-embedded transacetylase reaction.</title>
        <authorList>
            <person name="Tueting C."/>
            <person name="Kyrilis F.L."/>
            <person name="Mueller J."/>
            <person name="Sorokina M."/>
            <person name="Skalidis I."/>
            <person name="Hamdi F."/>
            <person name="Sadian Y."/>
            <person name="Kastritis P.L."/>
        </authorList>
    </citation>
    <scope>FUNCTION</scope>
    <scope>SUBUNIT</scope>
</reference>
<feature type="transit peptide" description="Mitochondrion" evidence="3">
    <location>
        <begin position="1"/>
        <end position="34"/>
    </location>
</feature>
<feature type="chain" id="PRO_0000456224" description="Dihydrolipoamide dehydrogenase" evidence="3">
    <location>
        <begin position="35"/>
        <end position="504"/>
    </location>
</feature>
<feature type="active site" description="Proton acceptor" evidence="2">
    <location>
        <position position="483"/>
    </location>
</feature>
<feature type="binding site" evidence="2">
    <location>
        <begin position="69"/>
        <end position="78"/>
    </location>
    <ligand>
        <name>FAD</name>
        <dbReference type="ChEBI" id="CHEBI:57692"/>
    </ligand>
</feature>
<feature type="binding site" evidence="2">
    <location>
        <position position="87"/>
    </location>
    <ligand>
        <name>FAD</name>
        <dbReference type="ChEBI" id="CHEBI:57692"/>
    </ligand>
</feature>
<feature type="binding site" evidence="2">
    <location>
        <position position="151"/>
    </location>
    <ligand>
        <name>FAD</name>
        <dbReference type="ChEBI" id="CHEBI:57692"/>
    </ligand>
</feature>
<feature type="binding site" evidence="1">
    <location>
        <begin position="180"/>
        <end position="182"/>
    </location>
    <ligand>
        <name>FAD</name>
        <dbReference type="ChEBI" id="CHEBI:57692"/>
    </ligand>
</feature>
<feature type="binding site" evidence="1">
    <location>
        <begin position="217"/>
        <end position="224"/>
    </location>
    <ligand>
        <name>NAD(+)</name>
        <dbReference type="ChEBI" id="CHEBI:57540"/>
    </ligand>
</feature>
<feature type="binding site" evidence="1">
    <location>
        <position position="240"/>
    </location>
    <ligand>
        <name>NAD(+)</name>
        <dbReference type="ChEBI" id="CHEBI:57540"/>
    </ligand>
</feature>
<feature type="binding site" evidence="1">
    <location>
        <position position="275"/>
    </location>
    <ligand>
        <name>NAD(+)</name>
        <dbReference type="ChEBI" id="CHEBI:57540"/>
    </ligand>
</feature>
<feature type="binding site" evidence="1">
    <location>
        <position position="310"/>
    </location>
    <ligand>
        <name>NAD(+)</name>
        <dbReference type="ChEBI" id="CHEBI:57540"/>
    </ligand>
</feature>
<feature type="binding site" evidence="2">
    <location>
        <position position="351"/>
    </location>
    <ligand>
        <name>FAD</name>
        <dbReference type="ChEBI" id="CHEBI:57692"/>
    </ligand>
</feature>
<feature type="binding site" evidence="2">
    <location>
        <begin position="357"/>
        <end position="360"/>
    </location>
    <ligand>
        <name>FAD</name>
        <dbReference type="ChEBI" id="CHEBI:57692"/>
    </ligand>
</feature>
<feature type="site" description="Important for interaction with PDHX and activity of multienzyme pyruvate dehydrogenase complex" evidence="1">
    <location>
        <position position="444"/>
    </location>
</feature>
<feature type="site" description="Important for interaction with PDHX and activity of multienzyme pyruvate dehydrogenase complex" evidence="1">
    <location>
        <position position="469"/>
    </location>
</feature>
<feature type="disulfide bond" description="Redox-active" evidence="2">
    <location>
        <begin position="78"/>
        <end position="83"/>
    </location>
</feature>
<dbReference type="EC" id="1.8.1.4" evidence="8"/>
<dbReference type="EMBL" id="GL988044">
    <property type="protein sequence ID" value="EGS19400.1"/>
    <property type="molecule type" value="Genomic_DNA"/>
</dbReference>
<dbReference type="RefSeq" id="XP_006695222.1">
    <property type="nucleotide sequence ID" value="XM_006695159.1"/>
</dbReference>
<dbReference type="SMR" id="G0SB20"/>
<dbReference type="STRING" id="759272.G0SB20"/>
<dbReference type="GeneID" id="18258897"/>
<dbReference type="KEGG" id="cthr:CTHT_0048590"/>
<dbReference type="eggNOG" id="KOG1335">
    <property type="taxonomic scope" value="Eukaryota"/>
</dbReference>
<dbReference type="HOGENOM" id="CLU_016755_0_1_1"/>
<dbReference type="OMA" id="CAQLGMK"/>
<dbReference type="OrthoDB" id="361797at2759"/>
<dbReference type="Proteomes" id="UP000008066">
    <property type="component" value="Unassembled WGS sequence"/>
</dbReference>
<dbReference type="GO" id="GO:0005739">
    <property type="term" value="C:mitochondrion"/>
    <property type="evidence" value="ECO:0007669"/>
    <property type="project" value="UniProtKB-SubCell"/>
</dbReference>
<dbReference type="GO" id="GO:0045252">
    <property type="term" value="C:oxoglutarate dehydrogenase complex"/>
    <property type="evidence" value="ECO:0007669"/>
    <property type="project" value="TreeGrafter"/>
</dbReference>
<dbReference type="GO" id="GO:0004148">
    <property type="term" value="F:dihydrolipoyl dehydrogenase (NADH) activity"/>
    <property type="evidence" value="ECO:0007669"/>
    <property type="project" value="UniProtKB-EC"/>
</dbReference>
<dbReference type="GO" id="GO:0050660">
    <property type="term" value="F:flavin adenine dinucleotide binding"/>
    <property type="evidence" value="ECO:0007669"/>
    <property type="project" value="InterPro"/>
</dbReference>
<dbReference type="GO" id="GO:0006103">
    <property type="term" value="P:2-oxoglutarate metabolic process"/>
    <property type="evidence" value="ECO:0007669"/>
    <property type="project" value="TreeGrafter"/>
</dbReference>
<dbReference type="FunFam" id="3.30.390.30:FF:000001">
    <property type="entry name" value="Dihydrolipoyl dehydrogenase"/>
    <property type="match status" value="1"/>
</dbReference>
<dbReference type="FunFam" id="3.50.50.60:FF:000025">
    <property type="entry name" value="Dihydrolipoyl dehydrogenase"/>
    <property type="match status" value="1"/>
</dbReference>
<dbReference type="Gene3D" id="3.30.390.30">
    <property type="match status" value="1"/>
</dbReference>
<dbReference type="Gene3D" id="3.50.50.60">
    <property type="entry name" value="FAD/NAD(P)-binding domain"/>
    <property type="match status" value="2"/>
</dbReference>
<dbReference type="InterPro" id="IPR050151">
    <property type="entry name" value="Class-I_Pyr_Nuc-Dis_Oxidored"/>
</dbReference>
<dbReference type="InterPro" id="IPR036188">
    <property type="entry name" value="FAD/NAD-bd_sf"/>
</dbReference>
<dbReference type="InterPro" id="IPR023753">
    <property type="entry name" value="FAD/NAD-binding_dom"/>
</dbReference>
<dbReference type="InterPro" id="IPR016156">
    <property type="entry name" value="FAD/NAD-linked_Rdtase_dimer_sf"/>
</dbReference>
<dbReference type="InterPro" id="IPR006258">
    <property type="entry name" value="Lipoamide_DH"/>
</dbReference>
<dbReference type="InterPro" id="IPR001100">
    <property type="entry name" value="Pyr_nuc-diS_OxRdtase"/>
</dbReference>
<dbReference type="InterPro" id="IPR004099">
    <property type="entry name" value="Pyr_nucl-diS_OxRdtase_dimer"/>
</dbReference>
<dbReference type="InterPro" id="IPR012999">
    <property type="entry name" value="Pyr_OxRdtase_I_AS"/>
</dbReference>
<dbReference type="NCBIfam" id="TIGR01350">
    <property type="entry name" value="lipoamide_DH"/>
    <property type="match status" value="1"/>
</dbReference>
<dbReference type="PANTHER" id="PTHR22912:SF151">
    <property type="entry name" value="DIHYDROLIPOYL DEHYDROGENASE, MITOCHONDRIAL"/>
    <property type="match status" value="1"/>
</dbReference>
<dbReference type="PANTHER" id="PTHR22912">
    <property type="entry name" value="DISULFIDE OXIDOREDUCTASE"/>
    <property type="match status" value="1"/>
</dbReference>
<dbReference type="Pfam" id="PF07992">
    <property type="entry name" value="Pyr_redox_2"/>
    <property type="match status" value="1"/>
</dbReference>
<dbReference type="Pfam" id="PF02852">
    <property type="entry name" value="Pyr_redox_dim"/>
    <property type="match status" value="1"/>
</dbReference>
<dbReference type="PIRSF" id="PIRSF000350">
    <property type="entry name" value="Mercury_reductase_MerA"/>
    <property type="match status" value="1"/>
</dbReference>
<dbReference type="PRINTS" id="PR00368">
    <property type="entry name" value="FADPNR"/>
</dbReference>
<dbReference type="PRINTS" id="PR00411">
    <property type="entry name" value="PNDRDTASEI"/>
</dbReference>
<dbReference type="SUPFAM" id="SSF51905">
    <property type="entry name" value="FAD/NAD(P)-binding domain"/>
    <property type="match status" value="1"/>
</dbReference>
<dbReference type="SUPFAM" id="SSF55424">
    <property type="entry name" value="FAD/NAD-linked reductases, dimerisation (C-terminal) domain"/>
    <property type="match status" value="1"/>
</dbReference>
<dbReference type="PROSITE" id="PS00076">
    <property type="entry name" value="PYRIDINE_REDOX_1"/>
    <property type="match status" value="1"/>
</dbReference>
<protein>
    <recommendedName>
        <fullName evidence="6">Dihydrolipoamide dehydrogenase</fullName>
        <ecNumber evidence="8">1.8.1.4</ecNumber>
    </recommendedName>
    <alternativeName>
        <fullName>Lipoamide dehydrogenase component of pyruvate dehydrogenase complex</fullName>
    </alternativeName>
    <alternativeName>
        <fullName evidence="6">Pyruvate dehydrogenase complex E3 component</fullName>
    </alternativeName>
</protein>
<comment type="function">
    <text evidence="1 4 5 8">Lipoamide dehydrogenase is a component of the alpha-ketoacid dehydrogenase complexes (By similarity). This includes the pyruvate dehydrogenase complex, which catalyzes the overall conversion of pyruvate to acetyl-CoA and CO(2). Also acts as a component of the glycine cleavage system (glycine decarboxylase complex), which catalyzes the degradation of glycine (By similarity). The 10-megadalton pyruvate dehydrogenase complex contains multiple copies of three enzymatic components: pyruvate dehydrogenase (E1), dihydrolipoamide acetyltransferase (E2) and lipoamide dehydrogenase (E3) and catalyzes the overall oxidative decarboxylation of pyruvate to form acetyl-CoA and CO(2) (PubMed:33567276, PubMed:34836937). Within the complex, pyruvate and thiamine pyrophosphate (TPP or vitamin B1) are bound by pyruvate dehydrogenase E1 subunits alpha and beta and pyruvate is decarboxylated leading to the 2-carbon hydrohyethyl bound to TPP. The E2 component contains covalently-bound lipoyl cofactors and transfers the hydroxyethyl group from TPP to an oxidized form of covalently bound lipoamide, and the resulting acetyl group is then transferred to free coenzyme A to form acetyl-CoA and reduced dihydrolipoamide-E2. Finally, the flavoprotein dihydrolipoamide dehydrogenase (E3) re-oxidizes the lipoyl group of dihydrolipoamide-E2 to form lipoamide-E2 and NADH. A fourth subunit, E3BP, is responsible for tethering E3 in proximity to the core, forming the entire metabolon (Probable).</text>
</comment>
<comment type="catalytic activity">
    <reaction evidence="1">
        <text>N(6)-[(R)-dihydrolipoyl]-L-lysyl-[protein] + NAD(+) = N(6)-[(R)-lipoyl]-L-lysyl-[protein] + NADH + H(+)</text>
        <dbReference type="Rhea" id="RHEA:15045"/>
        <dbReference type="Rhea" id="RHEA-COMP:10474"/>
        <dbReference type="Rhea" id="RHEA-COMP:10475"/>
        <dbReference type="ChEBI" id="CHEBI:15378"/>
        <dbReference type="ChEBI" id="CHEBI:57540"/>
        <dbReference type="ChEBI" id="CHEBI:57945"/>
        <dbReference type="ChEBI" id="CHEBI:83099"/>
        <dbReference type="ChEBI" id="CHEBI:83100"/>
        <dbReference type="EC" id="1.8.1.4"/>
    </reaction>
    <physiologicalReaction direction="left-to-right" evidence="1">
        <dbReference type="Rhea" id="RHEA:15046"/>
    </physiologicalReaction>
</comment>
<comment type="cofactor">
    <cofactor evidence="1">
        <name>FAD</name>
        <dbReference type="ChEBI" id="CHEBI:57692"/>
    </cofactor>
    <text evidence="1">Binds 1 FAD per subunit.</text>
</comment>
<comment type="subunit">
    <text evidence="4">Eukaryotic pyruvate dehydrogenase (PDH) complexes are organized as a core consisting of the oligomeric dihydrolipoamide acetyl-transferase (E2), around which are arranged multiple copies of pyruvate dehydrogenase (E1), dihydrolipoamide dehydrogenase (E3) and protein X (E3BP) bound by non-covalent bonds (PubMed:33567276). The Chaetomium thermophilum PDH complex contains 60 E2 units, 12 E3BP units, about 20 E1 units, and 12 or more E3 units (PubMed:33567276). The units are organized in 1 E2 60-mer, 4 E3BP trimers, about 20 E1 tetramers, and a maximum of 12 E3 dimers (PubMed:33567276). The E3BP trimers are bound inside the icosahedral core with tetrahedral symmetry (PubMed:33567276).</text>
</comment>
<comment type="subcellular location">
    <subcellularLocation>
        <location evidence="3">Mitochondrion</location>
    </subcellularLocation>
</comment>
<comment type="miscellaneous">
    <text evidence="2">The active site is a redox-active disulfide bond.</text>
</comment>
<comment type="similarity">
    <text evidence="7">Belongs to the class-I pyridine nucleotide-disulfide oxidoreductase family.</text>
</comment>
<accession>G0SB20</accession>
<sequence>MLSQRLIGRTAVKSAFRPSGLPTVVNASRWRRGYATEADRDLVIIGGGVAGYVAAIKAGQEGMKVTCIEKRGTLGGTCLNVGCIPSKSLLNNSHLYHTILHDTKHRGIEVGDVKLNLGQLMKAKEQSVSGLTKGIEFLFKKNGVEYLKGTGSFEDPHTVKVELNDGGETRVTGKNILIATGSEVTPFPGLEIDEKTIISSTGALSLDHVPKKFLVIGGGIIGLEMASVWSRLGSEVTVVEYLDQIGGPGMDTEISKNIQKILKKQGINFKTGTKVLNGEKTGDGVKINVEAAKGGKPETLEADVVLVAIGRRPYTKGLGLEKIGIELDERGRVIIDQEYRTKIPHIRCVGDATFGPMLAHKAEEEAVAVVEYIKKGYGHVNYGCIPAVMYTFPEVAWVGQSEQDLKKAGIPYRVGTFPFSANSRAKTNLDTEGFVKMLADPETDRLLGIHIIGPNAGEMIAEGTLALEYGASSEDIARTCHAHPTLAEAFKEAAMATYSKAIHF</sequence>
<name>DLDH_CHATD</name>